<proteinExistence type="inferred from homology"/>
<organism>
    <name type="scientific">Acaryochloris marina (strain MBIC 11017)</name>
    <dbReference type="NCBI Taxonomy" id="329726"/>
    <lineage>
        <taxon>Bacteria</taxon>
        <taxon>Bacillati</taxon>
        <taxon>Cyanobacteriota</taxon>
        <taxon>Cyanophyceae</taxon>
        <taxon>Acaryochloridales</taxon>
        <taxon>Acaryochloridaceae</taxon>
        <taxon>Acaryochloris</taxon>
    </lineage>
</organism>
<evidence type="ECO:0000255" key="1">
    <source>
        <dbReference type="HAMAP-Rule" id="MF_00693"/>
    </source>
</evidence>
<protein>
    <recommendedName>
        <fullName evidence="1">Probable transcriptional regulatory protein AM1_1847</fullName>
    </recommendedName>
</protein>
<keyword id="KW-0963">Cytoplasm</keyword>
<keyword id="KW-0238">DNA-binding</keyword>
<keyword id="KW-1185">Reference proteome</keyword>
<keyword id="KW-0804">Transcription</keyword>
<keyword id="KW-0805">Transcription regulation</keyword>
<dbReference type="EMBL" id="CP000828">
    <property type="protein sequence ID" value="ABW26867.1"/>
    <property type="molecule type" value="Genomic_DNA"/>
</dbReference>
<dbReference type="RefSeq" id="WP_012162370.1">
    <property type="nucleotide sequence ID" value="NC_009925.1"/>
</dbReference>
<dbReference type="SMR" id="B0CDE2"/>
<dbReference type="STRING" id="329726.AM1_1847"/>
<dbReference type="KEGG" id="amr:AM1_1847"/>
<dbReference type="eggNOG" id="COG0217">
    <property type="taxonomic scope" value="Bacteria"/>
</dbReference>
<dbReference type="HOGENOM" id="CLU_062974_1_0_3"/>
<dbReference type="OrthoDB" id="9781053at2"/>
<dbReference type="Proteomes" id="UP000000268">
    <property type="component" value="Chromosome"/>
</dbReference>
<dbReference type="GO" id="GO:0005829">
    <property type="term" value="C:cytosol"/>
    <property type="evidence" value="ECO:0007669"/>
    <property type="project" value="TreeGrafter"/>
</dbReference>
<dbReference type="GO" id="GO:0003677">
    <property type="term" value="F:DNA binding"/>
    <property type="evidence" value="ECO:0007669"/>
    <property type="project" value="UniProtKB-UniRule"/>
</dbReference>
<dbReference type="GO" id="GO:0006355">
    <property type="term" value="P:regulation of DNA-templated transcription"/>
    <property type="evidence" value="ECO:0007669"/>
    <property type="project" value="UniProtKB-UniRule"/>
</dbReference>
<dbReference type="FunFam" id="1.10.10.200:FF:000002">
    <property type="entry name" value="Probable transcriptional regulatory protein CLM62_37755"/>
    <property type="match status" value="1"/>
</dbReference>
<dbReference type="Gene3D" id="1.10.10.200">
    <property type="match status" value="1"/>
</dbReference>
<dbReference type="Gene3D" id="3.30.70.980">
    <property type="match status" value="2"/>
</dbReference>
<dbReference type="HAMAP" id="MF_00693">
    <property type="entry name" value="Transcrip_reg_TACO1"/>
    <property type="match status" value="1"/>
</dbReference>
<dbReference type="InterPro" id="IPR017856">
    <property type="entry name" value="Integrase-like_N"/>
</dbReference>
<dbReference type="InterPro" id="IPR048300">
    <property type="entry name" value="TACO1_YebC-like_2nd/3rd_dom"/>
</dbReference>
<dbReference type="InterPro" id="IPR049083">
    <property type="entry name" value="TACO1_YebC_N"/>
</dbReference>
<dbReference type="InterPro" id="IPR002876">
    <property type="entry name" value="Transcrip_reg_TACO1-like"/>
</dbReference>
<dbReference type="InterPro" id="IPR026564">
    <property type="entry name" value="Transcrip_reg_TACO1-like_dom3"/>
</dbReference>
<dbReference type="InterPro" id="IPR029072">
    <property type="entry name" value="YebC-like"/>
</dbReference>
<dbReference type="NCBIfam" id="NF001030">
    <property type="entry name" value="PRK00110.1"/>
    <property type="match status" value="1"/>
</dbReference>
<dbReference type="NCBIfam" id="NF009044">
    <property type="entry name" value="PRK12378.1"/>
    <property type="match status" value="1"/>
</dbReference>
<dbReference type="NCBIfam" id="TIGR01033">
    <property type="entry name" value="YebC/PmpR family DNA-binding transcriptional regulator"/>
    <property type="match status" value="1"/>
</dbReference>
<dbReference type="PANTHER" id="PTHR12532:SF6">
    <property type="entry name" value="TRANSCRIPTIONAL REGULATORY PROTEIN YEBC-RELATED"/>
    <property type="match status" value="1"/>
</dbReference>
<dbReference type="PANTHER" id="PTHR12532">
    <property type="entry name" value="TRANSLATIONAL ACTIVATOR OF CYTOCHROME C OXIDASE 1"/>
    <property type="match status" value="1"/>
</dbReference>
<dbReference type="Pfam" id="PF20772">
    <property type="entry name" value="TACO1_YebC_N"/>
    <property type="match status" value="1"/>
</dbReference>
<dbReference type="Pfam" id="PF01709">
    <property type="entry name" value="Transcrip_reg"/>
    <property type="match status" value="1"/>
</dbReference>
<dbReference type="SUPFAM" id="SSF75625">
    <property type="entry name" value="YebC-like"/>
    <property type="match status" value="1"/>
</dbReference>
<sequence>MAGHSKWANIKRQKARVDAKKGKVFARLSRAIIVAARHGSADPNGNFQLRSAIDKAKAAGIPNENIDRAIAKGSGQLDAEGDQWEEIRYEGYGIGGVALLIEAMTDNRNRTAADLRAAFNKYGGNLGETGCVGWMFHQQGIISILGPVDEDQLLESLVETGADSYEFVEENAQAIAEVSTDVTVLETVTEALKAQDFQILDAEIRWIGEMSVAIADPDQAKSLIRLMDALEDLDDVQSVTANVEFMDNALAGL</sequence>
<name>Y1847_ACAM1</name>
<gene>
    <name type="ordered locus">AM1_1847</name>
</gene>
<comment type="subcellular location">
    <subcellularLocation>
        <location evidence="1">Cytoplasm</location>
    </subcellularLocation>
</comment>
<comment type="similarity">
    <text evidence="1">Belongs to the TACO1 family.</text>
</comment>
<reference key="1">
    <citation type="journal article" date="2008" name="Proc. Natl. Acad. Sci. U.S.A.">
        <title>Niche adaptation and genome expansion in the chlorophyll d-producing cyanobacterium Acaryochloris marina.</title>
        <authorList>
            <person name="Swingley W.D."/>
            <person name="Chen M."/>
            <person name="Cheung P.C."/>
            <person name="Conrad A.L."/>
            <person name="Dejesa L.C."/>
            <person name="Hao J."/>
            <person name="Honchak B.M."/>
            <person name="Karbach L.E."/>
            <person name="Kurdoglu A."/>
            <person name="Lahiri S."/>
            <person name="Mastrian S.D."/>
            <person name="Miyashita H."/>
            <person name="Page L."/>
            <person name="Ramakrishna P."/>
            <person name="Satoh S."/>
            <person name="Sattley W.M."/>
            <person name="Shimada Y."/>
            <person name="Taylor H.L."/>
            <person name="Tomo T."/>
            <person name="Tsuchiya T."/>
            <person name="Wang Z.T."/>
            <person name="Raymond J."/>
            <person name="Mimuro M."/>
            <person name="Blankenship R.E."/>
            <person name="Touchman J.W."/>
        </authorList>
    </citation>
    <scope>NUCLEOTIDE SEQUENCE [LARGE SCALE GENOMIC DNA]</scope>
    <source>
        <strain>MBIC 11017</strain>
    </source>
</reference>
<feature type="chain" id="PRO_1000083140" description="Probable transcriptional regulatory protein AM1_1847">
    <location>
        <begin position="1"/>
        <end position="253"/>
    </location>
</feature>
<accession>B0CDE2</accession>